<comment type="function">
    <text>Kinesin is a microtubule-associated force-producing protein that may play a role in organelle transport. Its motor activity is directed toward the microtubule's plus end.</text>
</comment>
<comment type="subcellular location">
    <subcellularLocation>
        <location evidence="4">Cytoplasm</location>
        <location evidence="4">Cytoskeleton</location>
    </subcellularLocation>
</comment>
<comment type="domain">
    <text>Composed of three structural domains: a large globular N-terminal domain which is responsible for the motor activity of kinesin (it hydrolyzes ATP and binds microtubule), a central alpha-helical coiled coil domain that mediates the heavy chain dimerization; and a small globular C-terminal domain which interacts with other proteins (such as the kinesin light chains), vesicles and membranous organelles.</text>
</comment>
<comment type="similarity">
    <text evidence="2">Belongs to the TRAFAC class myosin-kinesin ATPase superfamily. Kinesin family. Kinesin subfamily.</text>
</comment>
<organism>
    <name type="scientific">Gibberella moniliformis</name>
    <name type="common">Maize ear and stalk rot fungus</name>
    <name type="synonym">Fusarium verticillioides</name>
    <dbReference type="NCBI Taxonomy" id="117187"/>
    <lineage>
        <taxon>Eukaryota</taxon>
        <taxon>Fungi</taxon>
        <taxon>Dikarya</taxon>
        <taxon>Ascomycota</taxon>
        <taxon>Pezizomycotina</taxon>
        <taxon>Sordariomycetes</taxon>
        <taxon>Hypocreomycetidae</taxon>
        <taxon>Hypocreales</taxon>
        <taxon>Nectriaceae</taxon>
        <taxon>Fusarium</taxon>
        <taxon>Fusarium fujikuroi species complex</taxon>
    </lineage>
</organism>
<name>KINH_GIBMO</name>
<accession>Q86Z98</accession>
<feature type="chain" id="PRO_0000125361" description="Kinesin heavy chain">
    <location>
        <begin position="1"/>
        <end position="931"/>
    </location>
</feature>
<feature type="domain" description="Kinesin motor" evidence="2">
    <location>
        <begin position="6"/>
        <end position="329"/>
    </location>
</feature>
<feature type="region of interest" description="Disordered" evidence="3">
    <location>
        <begin position="388"/>
        <end position="465"/>
    </location>
</feature>
<feature type="region of interest" description="Disordered" evidence="3">
    <location>
        <begin position="886"/>
        <end position="931"/>
    </location>
</feature>
<feature type="coiled-coil region" evidence="1">
    <location>
        <begin position="342"/>
        <end position="864"/>
    </location>
</feature>
<feature type="compositionally biased region" description="Polar residues" evidence="3">
    <location>
        <begin position="402"/>
        <end position="419"/>
    </location>
</feature>
<feature type="compositionally biased region" description="Basic and acidic residues" evidence="3">
    <location>
        <begin position="432"/>
        <end position="456"/>
    </location>
</feature>
<feature type="compositionally biased region" description="Polar residues" evidence="3">
    <location>
        <begin position="902"/>
        <end position="931"/>
    </location>
</feature>
<feature type="binding site" evidence="2">
    <location>
        <begin position="87"/>
        <end position="94"/>
    </location>
    <ligand>
        <name>ATP</name>
        <dbReference type="ChEBI" id="CHEBI:30616"/>
    </ligand>
</feature>
<feature type="binding site" evidence="2">
    <location>
        <begin position="237"/>
        <end position="244"/>
    </location>
    <ligand>
        <name>ATP</name>
        <dbReference type="ChEBI" id="CHEBI:30616"/>
    </ligand>
</feature>
<dbReference type="EMBL" id="AY230438">
    <property type="protein sequence ID" value="AAO59300.1"/>
    <property type="molecule type" value="Genomic_DNA"/>
</dbReference>
<dbReference type="SMR" id="Q86Z98"/>
<dbReference type="GO" id="GO:0005737">
    <property type="term" value="C:cytoplasm"/>
    <property type="evidence" value="ECO:0007669"/>
    <property type="project" value="UniProtKB-KW"/>
</dbReference>
<dbReference type="GO" id="GO:0005874">
    <property type="term" value="C:microtubule"/>
    <property type="evidence" value="ECO:0007669"/>
    <property type="project" value="UniProtKB-KW"/>
</dbReference>
<dbReference type="GO" id="GO:0005524">
    <property type="term" value="F:ATP binding"/>
    <property type="evidence" value="ECO:0007669"/>
    <property type="project" value="UniProtKB-KW"/>
</dbReference>
<dbReference type="GO" id="GO:0008017">
    <property type="term" value="F:microtubule binding"/>
    <property type="evidence" value="ECO:0007669"/>
    <property type="project" value="InterPro"/>
</dbReference>
<dbReference type="GO" id="GO:0003777">
    <property type="term" value="F:microtubule motor activity"/>
    <property type="evidence" value="ECO:0007669"/>
    <property type="project" value="InterPro"/>
</dbReference>
<dbReference type="GO" id="GO:0007018">
    <property type="term" value="P:microtubule-based movement"/>
    <property type="evidence" value="ECO:0007669"/>
    <property type="project" value="InterPro"/>
</dbReference>
<dbReference type="CDD" id="cd23649">
    <property type="entry name" value="Khc_CBD_cc"/>
    <property type="match status" value="1"/>
</dbReference>
<dbReference type="CDD" id="cd01369">
    <property type="entry name" value="KISc_KHC_KIF5"/>
    <property type="match status" value="1"/>
</dbReference>
<dbReference type="FunFam" id="3.40.850.10:FF:000031">
    <property type="entry name" value="Kinesin-like protein"/>
    <property type="match status" value="1"/>
</dbReference>
<dbReference type="Gene3D" id="3.40.850.10">
    <property type="entry name" value="Kinesin motor domain"/>
    <property type="match status" value="1"/>
</dbReference>
<dbReference type="InterPro" id="IPR027640">
    <property type="entry name" value="Kinesin-like_fam"/>
</dbReference>
<dbReference type="InterPro" id="IPR019821">
    <property type="entry name" value="Kinesin_motor_CS"/>
</dbReference>
<dbReference type="InterPro" id="IPR001752">
    <property type="entry name" value="Kinesin_motor_dom"/>
</dbReference>
<dbReference type="InterPro" id="IPR036961">
    <property type="entry name" value="Kinesin_motor_dom_sf"/>
</dbReference>
<dbReference type="InterPro" id="IPR027417">
    <property type="entry name" value="P-loop_NTPase"/>
</dbReference>
<dbReference type="PANTHER" id="PTHR47968">
    <property type="entry name" value="CENTROMERE PROTEIN E"/>
    <property type="match status" value="1"/>
</dbReference>
<dbReference type="PANTHER" id="PTHR47968:SF75">
    <property type="entry name" value="CENTROMERE-ASSOCIATED PROTEIN E"/>
    <property type="match status" value="1"/>
</dbReference>
<dbReference type="Pfam" id="PF00225">
    <property type="entry name" value="Kinesin"/>
    <property type="match status" value="1"/>
</dbReference>
<dbReference type="PRINTS" id="PR00380">
    <property type="entry name" value="KINESINHEAVY"/>
</dbReference>
<dbReference type="SMART" id="SM00129">
    <property type="entry name" value="KISc"/>
    <property type="match status" value="1"/>
</dbReference>
<dbReference type="SUPFAM" id="SSF52540">
    <property type="entry name" value="P-loop containing nucleoside triphosphate hydrolases"/>
    <property type="match status" value="1"/>
</dbReference>
<dbReference type="PROSITE" id="PS00411">
    <property type="entry name" value="KINESIN_MOTOR_1"/>
    <property type="match status" value="1"/>
</dbReference>
<dbReference type="PROSITE" id="PS50067">
    <property type="entry name" value="KINESIN_MOTOR_2"/>
    <property type="match status" value="1"/>
</dbReference>
<gene>
    <name type="primary">KLP1</name>
</gene>
<keyword id="KW-0067">ATP-binding</keyword>
<keyword id="KW-0175">Coiled coil</keyword>
<keyword id="KW-0963">Cytoplasm</keyword>
<keyword id="KW-0206">Cytoskeleton</keyword>
<keyword id="KW-0493">Microtubule</keyword>
<keyword id="KW-0505">Motor protein</keyword>
<keyword id="KW-0547">Nucleotide-binding</keyword>
<evidence type="ECO:0000255" key="1"/>
<evidence type="ECO:0000255" key="2">
    <source>
        <dbReference type="PROSITE-ProRule" id="PRU00283"/>
    </source>
</evidence>
<evidence type="ECO:0000256" key="3">
    <source>
        <dbReference type="SAM" id="MobiDB-lite"/>
    </source>
</evidence>
<evidence type="ECO:0000305" key="4"/>
<proteinExistence type="inferred from homology"/>
<protein>
    <recommendedName>
        <fullName>Kinesin heavy chain</fullName>
    </recommendedName>
</protein>
<sequence length="931" mass="103243">MSSANSIKVVARFRPQNKVELESGGKPIVSFDGEDTCTVASKEAQGSFTFDRVFDMGCKQQDIFDFSIRSTVDDILNGYNGTVFAYGQTGAGKSYTMMGTNIDDDEGRGIIPRIVEQIFASIMSSPGTIEYTVRVSYMEIYMERIRDLLAPQNDNLPVHEEKNRGVYVKGLLEIYVSSVQEVYEVMRRGGNARAVAATNMNQESSRSHSIFVITITQKNVETGSAKSGQLFLVDLAGSEKVGKTGASGQTLEEAKKINKSLSALGMVINALTDGKSSHIPYRDSKLTRILQESLGGNSRTTLIINCSPSSYNDAETLGTLRFGMRAKSIKNKAKVNAELSPAELKSLLKKAQGQVTNFESYISSLEGEIQMWRAGEAVPKERWATPLTTDAVARTKADARTSTRPSTPSLISDSRSETPAISDRAGTPSLPLDKDEREEFLRRENELQDQISEKESQAASAEKQLRETKEELAYLKDHDSKVGKENEKLTTEVNEFKMQLERLTFESKEAQITMDALKEANSELTTELDEVKQQLLDVKMSAKESGAALDEKEKRKAEKMAKMMAGFDLGGEVFSENERHIAETIEKVDSLHELSATGDNIAPDEFKALKARLVETQGIVRQAELSMYSTSSSESDSRRRQELEARLEAVQAEYEEILTRNLGPEDIEEVKARLENAFANRQTAQSQFVEELKEDIAQKAAENTRMKTLIEDLQQRVKAGATAPMANGKTIQQQIAEFDVMKKSLMRDLQNRCERVVELEISLDETREQYNNVLRSSNNRAQQKKMAFLERNLEQLTQVQRQLVEQNSALKKEVAIAERKLIARNERIQSLESLLQDSQEKMAAANHKYVQLAAVKERLELAKAGSTRGLNSPGGFSFANAGSRIAKPLRGGGGGNDAPSIPTIQNLQGQNEGNTSSGSSSKRASWFFTKS</sequence>
<reference key="1">
    <citation type="journal article" date="2003" name="Fungal Genet. Biol.">
        <title>A complete inventory of fungal kinesins in representative filamentous ascomycetes.</title>
        <authorList>
            <person name="Schoch C.L."/>
            <person name="Aist J.R."/>
            <person name="Yoder O.C."/>
            <person name="Gillian Turgeon B."/>
        </authorList>
    </citation>
    <scope>NUCLEOTIDE SEQUENCE [GENOMIC DNA]</scope>
</reference>